<proteinExistence type="inferred from homology"/>
<comment type="catalytic activity">
    <reaction evidence="1">
        <text>5-amino-1-(5-phospho-D-ribosyl)imidazole-4-carboxylate + L-aspartate + ATP = (2S)-2-[5-amino-1-(5-phospho-beta-D-ribosyl)imidazole-4-carboxamido]succinate + ADP + phosphate + 2 H(+)</text>
        <dbReference type="Rhea" id="RHEA:22628"/>
        <dbReference type="ChEBI" id="CHEBI:15378"/>
        <dbReference type="ChEBI" id="CHEBI:29991"/>
        <dbReference type="ChEBI" id="CHEBI:30616"/>
        <dbReference type="ChEBI" id="CHEBI:43474"/>
        <dbReference type="ChEBI" id="CHEBI:58443"/>
        <dbReference type="ChEBI" id="CHEBI:77657"/>
        <dbReference type="ChEBI" id="CHEBI:456216"/>
        <dbReference type="EC" id="6.3.2.6"/>
    </reaction>
</comment>
<comment type="pathway">
    <text evidence="1">Purine metabolism; IMP biosynthesis via de novo pathway; 5-amino-1-(5-phospho-D-ribosyl)imidazole-4-carboxamide from 5-amino-1-(5-phospho-D-ribosyl)imidazole-4-carboxylate: step 1/2.</text>
</comment>
<comment type="similarity">
    <text evidence="1">Belongs to the SAICAR synthetase family.</text>
</comment>
<sequence>MSQPLLQSHLTSLPLIHRGKVRDLYAVGDDHLLIVTTDRVSAFDVILPTPIPGKGEVLTKISEFWFRKLEHIVPNQLADMSLAEAVPDAAERAPLEGRSLVVKRLKALPIEAVVRGYLIGSGWKDYQKTGQVCGNPLPAGLQLADRLPEPIYTPSTKAAVGDHDENVDFDYTAELVGPELAAQVRQTALALYKAAAEYALARGIIIADTKFEFGLDDEGVLHLIDEALTPDSSRFWPADTYRPGISPPSFDKQFVRDYLETLDWNKQAPGPELPPDVVQKTTEKYREALLRLTGAS</sequence>
<name>PUR7_THISH</name>
<accession>B8GP39</accession>
<reference key="1">
    <citation type="journal article" date="2011" name="Stand. Genomic Sci.">
        <title>Complete genome sequence of 'Thioalkalivibrio sulfidophilus' HL-EbGr7.</title>
        <authorList>
            <person name="Muyzer G."/>
            <person name="Sorokin D.Y."/>
            <person name="Mavromatis K."/>
            <person name="Lapidus A."/>
            <person name="Clum A."/>
            <person name="Ivanova N."/>
            <person name="Pati A."/>
            <person name="d'Haeseleer P."/>
            <person name="Woyke T."/>
            <person name="Kyrpides N.C."/>
        </authorList>
    </citation>
    <scope>NUCLEOTIDE SEQUENCE [LARGE SCALE GENOMIC DNA]</scope>
    <source>
        <strain>HL-EbGR7</strain>
    </source>
</reference>
<feature type="chain" id="PRO_1000122938" description="Phosphoribosylaminoimidazole-succinocarboxamide synthase">
    <location>
        <begin position="1"/>
        <end position="296"/>
    </location>
</feature>
<gene>
    <name evidence="1" type="primary">purC</name>
    <name type="ordered locus">Tgr7_2886</name>
</gene>
<keyword id="KW-0067">ATP-binding</keyword>
<keyword id="KW-0436">Ligase</keyword>
<keyword id="KW-0547">Nucleotide-binding</keyword>
<keyword id="KW-0658">Purine biosynthesis</keyword>
<keyword id="KW-1185">Reference proteome</keyword>
<evidence type="ECO:0000255" key="1">
    <source>
        <dbReference type="HAMAP-Rule" id="MF_00137"/>
    </source>
</evidence>
<dbReference type="EC" id="6.3.2.6" evidence="1"/>
<dbReference type="EMBL" id="CP001339">
    <property type="protein sequence ID" value="ACL73959.1"/>
    <property type="molecule type" value="Genomic_DNA"/>
</dbReference>
<dbReference type="RefSeq" id="WP_012639422.1">
    <property type="nucleotide sequence ID" value="NC_011901.1"/>
</dbReference>
<dbReference type="SMR" id="B8GP39"/>
<dbReference type="STRING" id="396588.Tgr7_2886"/>
<dbReference type="KEGG" id="tgr:Tgr7_2886"/>
<dbReference type="eggNOG" id="COG0152">
    <property type="taxonomic scope" value="Bacteria"/>
</dbReference>
<dbReference type="HOGENOM" id="CLU_045637_0_0_6"/>
<dbReference type="OrthoDB" id="9801549at2"/>
<dbReference type="UniPathway" id="UPA00074">
    <property type="reaction ID" value="UER00131"/>
</dbReference>
<dbReference type="Proteomes" id="UP000002383">
    <property type="component" value="Chromosome"/>
</dbReference>
<dbReference type="GO" id="GO:0005737">
    <property type="term" value="C:cytoplasm"/>
    <property type="evidence" value="ECO:0007669"/>
    <property type="project" value="TreeGrafter"/>
</dbReference>
<dbReference type="GO" id="GO:0005524">
    <property type="term" value="F:ATP binding"/>
    <property type="evidence" value="ECO:0007669"/>
    <property type="project" value="UniProtKB-KW"/>
</dbReference>
<dbReference type="GO" id="GO:0004639">
    <property type="term" value="F:phosphoribosylaminoimidazolesuccinocarboxamide synthase activity"/>
    <property type="evidence" value="ECO:0007669"/>
    <property type="project" value="UniProtKB-UniRule"/>
</dbReference>
<dbReference type="GO" id="GO:0006189">
    <property type="term" value="P:'de novo' IMP biosynthetic process"/>
    <property type="evidence" value="ECO:0007669"/>
    <property type="project" value="UniProtKB-UniRule"/>
</dbReference>
<dbReference type="CDD" id="cd01414">
    <property type="entry name" value="SAICAR_synt_Sc"/>
    <property type="match status" value="1"/>
</dbReference>
<dbReference type="FunFam" id="3.30.470.20:FF:000015">
    <property type="entry name" value="Phosphoribosylaminoimidazole-succinocarboxamide synthase"/>
    <property type="match status" value="1"/>
</dbReference>
<dbReference type="Gene3D" id="3.30.470.20">
    <property type="entry name" value="ATP-grasp fold, B domain"/>
    <property type="match status" value="1"/>
</dbReference>
<dbReference type="Gene3D" id="3.30.200.20">
    <property type="entry name" value="Phosphorylase Kinase, domain 1"/>
    <property type="match status" value="1"/>
</dbReference>
<dbReference type="HAMAP" id="MF_00137">
    <property type="entry name" value="SAICAR_synth"/>
    <property type="match status" value="1"/>
</dbReference>
<dbReference type="InterPro" id="IPR028923">
    <property type="entry name" value="SAICAR_synt/ADE2_N"/>
</dbReference>
<dbReference type="InterPro" id="IPR001636">
    <property type="entry name" value="SAICAR_synth"/>
</dbReference>
<dbReference type="InterPro" id="IPR018236">
    <property type="entry name" value="SAICAR_synthetase_CS"/>
</dbReference>
<dbReference type="NCBIfam" id="NF010568">
    <property type="entry name" value="PRK13961.1"/>
    <property type="match status" value="1"/>
</dbReference>
<dbReference type="NCBIfam" id="TIGR00081">
    <property type="entry name" value="purC"/>
    <property type="match status" value="1"/>
</dbReference>
<dbReference type="PANTHER" id="PTHR43700">
    <property type="entry name" value="PHOSPHORIBOSYLAMINOIMIDAZOLE-SUCCINOCARBOXAMIDE SYNTHASE"/>
    <property type="match status" value="1"/>
</dbReference>
<dbReference type="PANTHER" id="PTHR43700:SF1">
    <property type="entry name" value="PHOSPHORIBOSYLAMINOIMIDAZOLE-SUCCINOCARBOXAMIDE SYNTHASE"/>
    <property type="match status" value="1"/>
</dbReference>
<dbReference type="Pfam" id="PF01259">
    <property type="entry name" value="SAICAR_synt"/>
    <property type="match status" value="1"/>
</dbReference>
<dbReference type="SUPFAM" id="SSF56104">
    <property type="entry name" value="SAICAR synthase-like"/>
    <property type="match status" value="1"/>
</dbReference>
<dbReference type="PROSITE" id="PS01057">
    <property type="entry name" value="SAICAR_SYNTHETASE_1"/>
    <property type="match status" value="1"/>
</dbReference>
<dbReference type="PROSITE" id="PS01058">
    <property type="entry name" value="SAICAR_SYNTHETASE_2"/>
    <property type="match status" value="1"/>
</dbReference>
<protein>
    <recommendedName>
        <fullName evidence="1">Phosphoribosylaminoimidazole-succinocarboxamide synthase</fullName>
        <ecNumber evidence="1">6.3.2.6</ecNumber>
    </recommendedName>
    <alternativeName>
        <fullName evidence="1">SAICAR synthetase</fullName>
    </alternativeName>
</protein>
<organism>
    <name type="scientific">Thioalkalivibrio sulfidiphilus (strain HL-EbGR7)</name>
    <dbReference type="NCBI Taxonomy" id="396588"/>
    <lineage>
        <taxon>Bacteria</taxon>
        <taxon>Pseudomonadati</taxon>
        <taxon>Pseudomonadota</taxon>
        <taxon>Gammaproteobacteria</taxon>
        <taxon>Chromatiales</taxon>
        <taxon>Ectothiorhodospiraceae</taxon>
        <taxon>Thioalkalivibrio</taxon>
    </lineage>
</organism>